<keyword id="KW-0175">Coiled coil</keyword>
<keyword id="KW-0963">Cytoplasm</keyword>
<gene>
    <name evidence="1" type="primary">tmaR</name>
</gene>
<proteinExistence type="inferred from homology"/>
<reference key="1">
    <citation type="submission" date="2001-07" db="EMBL/GenBank/DDBJ databases">
        <authorList>
            <person name="Smajs D."/>
            <person name="Smarda J."/>
            <person name="Weinstock G.M."/>
        </authorList>
    </citation>
    <scope>NUCLEOTIDE SEQUENCE [GENOMIC DNA]</scope>
    <source>
        <strain>EF873</strain>
    </source>
</reference>
<comment type="function">
    <text evidence="1">Pole-localizer protein involved in the regulation of several cellular processes.</text>
</comment>
<comment type="subcellular location">
    <subcellularLocation>
        <location evidence="1">Cytoplasm</location>
    </subcellularLocation>
    <text evidence="1">Forms clusters that localize mainly near one pole of the cell.</text>
</comment>
<comment type="similarity">
    <text evidence="1">Belongs to the pole-localizer TmaR family.</text>
</comment>
<dbReference type="EMBL" id="AY046057">
    <property type="protein sequence ID" value="AAL01562.1"/>
    <property type="molecule type" value="Genomic_DNA"/>
</dbReference>
<dbReference type="SMR" id="Q8KR41"/>
<dbReference type="GO" id="GO:0005829">
    <property type="term" value="C:cytosol"/>
    <property type="evidence" value="ECO:0007669"/>
    <property type="project" value="TreeGrafter"/>
</dbReference>
<dbReference type="HAMAP" id="MF_00683">
    <property type="entry name" value="Pole_loc_TmaR"/>
    <property type="match status" value="1"/>
</dbReference>
<dbReference type="InterPro" id="IPR007458">
    <property type="entry name" value="DUF496"/>
</dbReference>
<dbReference type="InterPro" id="IPR053375">
    <property type="entry name" value="UPF0265"/>
</dbReference>
<dbReference type="NCBIfam" id="NF003844">
    <property type="entry name" value="PRK05423.1"/>
    <property type="match status" value="1"/>
</dbReference>
<dbReference type="NCBIfam" id="NF040881">
    <property type="entry name" value="PTS_reg_TmaR"/>
    <property type="match status" value="1"/>
</dbReference>
<dbReference type="PANTHER" id="PTHR39591">
    <property type="entry name" value="UPF0265 PROTEIN YEEX"/>
    <property type="match status" value="1"/>
</dbReference>
<dbReference type="PANTHER" id="PTHR39591:SF1">
    <property type="entry name" value="UPF0265 PROTEIN YEEX"/>
    <property type="match status" value="1"/>
</dbReference>
<dbReference type="Pfam" id="PF04363">
    <property type="entry name" value="DUF496"/>
    <property type="match status" value="1"/>
</dbReference>
<dbReference type="PIRSF" id="PIRSF028773">
    <property type="entry name" value="UCP028773"/>
    <property type="match status" value="1"/>
</dbReference>
<feature type="chain" id="PRO_0000072761" description="Pole-localizer protein TmaR">
    <location>
        <begin position="1"/>
        <end position="111"/>
    </location>
</feature>
<feature type="coiled-coil region" evidence="1">
    <location>
        <begin position="14"/>
        <end position="41"/>
    </location>
</feature>
<organism>
    <name type="scientific">Escherichia fergusonii</name>
    <dbReference type="NCBI Taxonomy" id="564"/>
    <lineage>
        <taxon>Bacteria</taxon>
        <taxon>Pseudomonadati</taxon>
        <taxon>Pseudomonadota</taxon>
        <taxon>Gammaproteobacteria</taxon>
        <taxon>Enterobacterales</taxon>
        <taxon>Enterobacteriaceae</taxon>
        <taxon>Escherichia</taxon>
    </lineage>
</organism>
<protein>
    <recommendedName>
        <fullName evidence="1">Pole-localizer protein TmaR</fullName>
    </recommendedName>
</protein>
<evidence type="ECO:0000255" key="1">
    <source>
        <dbReference type="HAMAP-Rule" id="MF_00683"/>
    </source>
</evidence>
<sequence length="111" mass="13034">METTKPSFQDVLEFVRLFRRKNKLQREIQDVEKKIRDNQKRVLLLDNLSDYIKPGMSVEAIQGIIASMKSDYEDRVDDYIIKNAELSKERRDISKKLKVMGEIKNGEAKSE</sequence>
<name>TMAR_ESCFE</name>
<accession>Q8KR41</accession>